<dbReference type="EMBL" id="CP000469">
    <property type="protein sequence ID" value="ABK47561.1"/>
    <property type="molecule type" value="Genomic_DNA"/>
</dbReference>
<dbReference type="RefSeq" id="WP_011716401.1">
    <property type="nucleotide sequence ID" value="NC_008577.1"/>
</dbReference>
<dbReference type="SMR" id="A0KUU2"/>
<dbReference type="STRING" id="94122.Shewana3_1327"/>
<dbReference type="GeneID" id="75187992"/>
<dbReference type="KEGG" id="shn:Shewana3_1327"/>
<dbReference type="eggNOG" id="COG2063">
    <property type="taxonomic scope" value="Bacteria"/>
</dbReference>
<dbReference type="HOGENOM" id="CLU_069313_0_2_6"/>
<dbReference type="OrthoDB" id="9789463at2"/>
<dbReference type="Proteomes" id="UP000002589">
    <property type="component" value="Chromosome"/>
</dbReference>
<dbReference type="GO" id="GO:0009427">
    <property type="term" value="C:bacterial-type flagellum basal body, distal rod, L ring"/>
    <property type="evidence" value="ECO:0007669"/>
    <property type="project" value="InterPro"/>
</dbReference>
<dbReference type="GO" id="GO:0009279">
    <property type="term" value="C:cell outer membrane"/>
    <property type="evidence" value="ECO:0007669"/>
    <property type="project" value="UniProtKB-SubCell"/>
</dbReference>
<dbReference type="GO" id="GO:0003774">
    <property type="term" value="F:cytoskeletal motor activity"/>
    <property type="evidence" value="ECO:0007669"/>
    <property type="project" value="InterPro"/>
</dbReference>
<dbReference type="GO" id="GO:0071973">
    <property type="term" value="P:bacterial-type flagellum-dependent cell motility"/>
    <property type="evidence" value="ECO:0007669"/>
    <property type="project" value="InterPro"/>
</dbReference>
<dbReference type="HAMAP" id="MF_00415">
    <property type="entry name" value="FlgH"/>
    <property type="match status" value="1"/>
</dbReference>
<dbReference type="InterPro" id="IPR000527">
    <property type="entry name" value="Flag_Lring"/>
</dbReference>
<dbReference type="NCBIfam" id="NF001304">
    <property type="entry name" value="PRK00249.1-4"/>
    <property type="match status" value="1"/>
</dbReference>
<dbReference type="NCBIfam" id="NF009338">
    <property type="entry name" value="PRK12698.1"/>
    <property type="match status" value="1"/>
</dbReference>
<dbReference type="PANTHER" id="PTHR34933">
    <property type="entry name" value="FLAGELLAR L-RING PROTEIN"/>
    <property type="match status" value="1"/>
</dbReference>
<dbReference type="PANTHER" id="PTHR34933:SF1">
    <property type="entry name" value="FLAGELLAR L-RING PROTEIN"/>
    <property type="match status" value="1"/>
</dbReference>
<dbReference type="Pfam" id="PF02107">
    <property type="entry name" value="FlgH"/>
    <property type="match status" value="1"/>
</dbReference>
<dbReference type="PRINTS" id="PR01008">
    <property type="entry name" value="FLGLRINGFLGH"/>
</dbReference>
<dbReference type="PROSITE" id="PS51257">
    <property type="entry name" value="PROKAR_LIPOPROTEIN"/>
    <property type="match status" value="1"/>
</dbReference>
<accession>A0KUU2</accession>
<comment type="function">
    <text evidence="1">Assembles around the rod to form the L-ring and probably protects the motor/basal body from shearing forces during rotation.</text>
</comment>
<comment type="subunit">
    <text evidence="1">The basal body constitutes a major portion of the flagellar organelle and consists of four rings (L,P,S, and M) mounted on a central rod.</text>
</comment>
<comment type="subcellular location">
    <subcellularLocation>
        <location evidence="1">Cell outer membrane</location>
        <topology evidence="1">Lipid-anchor</topology>
    </subcellularLocation>
    <subcellularLocation>
        <location evidence="1">Bacterial flagellum basal body</location>
    </subcellularLocation>
</comment>
<comment type="similarity">
    <text evidence="1">Belongs to the FlgH family.</text>
</comment>
<name>FLGH_SHESA</name>
<sequence>MARYLLLASTLLLAACSSTPKKPIADDPFYAPVYPEAPPTKIAATGSIYQDSQAASLYSDIRAHKVGDIITIVLKEATQAKKSAGNQIKKGSDMTLDPIYAGGSNVSLGGIPLDLRYKDSMNTKRESDADQSNSLDGSISANIMQVLNNGNLVVRGEKWISINNGDEFIRVTGIVRSQDIKPDNTIDSTRMANARIQYSGTGTFAEAQKVGWLSQFFMSDWWPF</sequence>
<keyword id="KW-0975">Bacterial flagellum</keyword>
<keyword id="KW-0998">Cell outer membrane</keyword>
<keyword id="KW-0449">Lipoprotein</keyword>
<keyword id="KW-0472">Membrane</keyword>
<keyword id="KW-0564">Palmitate</keyword>
<keyword id="KW-0732">Signal</keyword>
<protein>
    <recommendedName>
        <fullName evidence="1">Flagellar L-ring protein</fullName>
    </recommendedName>
    <alternativeName>
        <fullName evidence="1">Basal body L-ring protein</fullName>
    </alternativeName>
</protein>
<evidence type="ECO:0000255" key="1">
    <source>
        <dbReference type="HAMAP-Rule" id="MF_00415"/>
    </source>
</evidence>
<organism>
    <name type="scientific">Shewanella sp. (strain ANA-3)</name>
    <dbReference type="NCBI Taxonomy" id="94122"/>
    <lineage>
        <taxon>Bacteria</taxon>
        <taxon>Pseudomonadati</taxon>
        <taxon>Pseudomonadota</taxon>
        <taxon>Gammaproteobacteria</taxon>
        <taxon>Alteromonadales</taxon>
        <taxon>Shewanellaceae</taxon>
        <taxon>Shewanella</taxon>
    </lineage>
</organism>
<gene>
    <name evidence="1" type="primary">flgH</name>
    <name type="ordered locus">Shewana3_1327</name>
</gene>
<proteinExistence type="inferred from homology"/>
<feature type="signal peptide" evidence="1">
    <location>
        <begin position="1"/>
        <end position="15"/>
    </location>
</feature>
<feature type="chain" id="PRO_1000050100" description="Flagellar L-ring protein">
    <location>
        <begin position="16"/>
        <end position="224"/>
    </location>
</feature>
<feature type="lipid moiety-binding region" description="N-palmitoyl cysteine" evidence="1">
    <location>
        <position position="16"/>
    </location>
</feature>
<feature type="lipid moiety-binding region" description="S-diacylglycerol cysteine" evidence="1">
    <location>
        <position position="16"/>
    </location>
</feature>
<reference key="1">
    <citation type="submission" date="2006-09" db="EMBL/GenBank/DDBJ databases">
        <title>Complete sequence of chromosome 1 of Shewanella sp. ANA-3.</title>
        <authorList>
            <person name="Copeland A."/>
            <person name="Lucas S."/>
            <person name="Lapidus A."/>
            <person name="Barry K."/>
            <person name="Detter J.C."/>
            <person name="Glavina del Rio T."/>
            <person name="Hammon N."/>
            <person name="Israni S."/>
            <person name="Dalin E."/>
            <person name="Tice H."/>
            <person name="Pitluck S."/>
            <person name="Chertkov O."/>
            <person name="Brettin T."/>
            <person name="Bruce D."/>
            <person name="Han C."/>
            <person name="Tapia R."/>
            <person name="Gilna P."/>
            <person name="Schmutz J."/>
            <person name="Larimer F."/>
            <person name="Land M."/>
            <person name="Hauser L."/>
            <person name="Kyrpides N."/>
            <person name="Kim E."/>
            <person name="Newman D."/>
            <person name="Salticov C."/>
            <person name="Konstantinidis K."/>
            <person name="Klappenback J."/>
            <person name="Tiedje J."/>
            <person name="Richardson P."/>
        </authorList>
    </citation>
    <scope>NUCLEOTIDE SEQUENCE [LARGE SCALE GENOMIC DNA]</scope>
    <source>
        <strain>ANA-3</strain>
    </source>
</reference>